<comment type="function">
    <text evidence="1">Component of a complex required to localize phosphatidylinositol 4-kinase (PI4K) to the plasma membrane.</text>
</comment>
<comment type="subunit">
    <text evidence="1">Component of a phosphatidylinositol 4-kinase (PI4K) complex, composed of PI4KA, EFR3 (EFR3A or EFR3B), TTC7 (TTC7A or TTC7B) and HYCC (HYCC1 or HYCC2).</text>
</comment>
<comment type="subcellular location">
    <subcellularLocation>
        <location evidence="2">Cytoplasm</location>
        <location evidence="2">Cytosol</location>
    </subcellularLocation>
    <subcellularLocation>
        <location evidence="2">Cell membrane</location>
    </subcellularLocation>
</comment>
<comment type="alternative products">
    <event type="alternative splicing"/>
    <isoform>
        <id>Q8C729-1</id>
        <name>1</name>
        <sequence type="displayed"/>
    </isoform>
    <isoform>
        <id>Q8C729-2</id>
        <name>2</name>
        <sequence type="described" ref="VSP_035078"/>
    </isoform>
</comment>
<comment type="tissue specificity">
    <text evidence="4">Expressed in the central nervous system. Expressed at much lower level in oligodendrocytes than in neurons.</text>
</comment>
<comment type="similarity">
    <text evidence="6">Belongs to the Hyccin family.</text>
</comment>
<feature type="chain" id="PRO_0000278095" description="Hyccin 2">
    <location>
        <begin position="1"/>
        <end position="530"/>
    </location>
</feature>
<feature type="region of interest" description="Disordered" evidence="3">
    <location>
        <begin position="328"/>
        <end position="404"/>
    </location>
</feature>
<feature type="region of interest" description="Disordered" evidence="3">
    <location>
        <begin position="502"/>
        <end position="530"/>
    </location>
</feature>
<feature type="compositionally biased region" description="Polar residues" evidence="3">
    <location>
        <begin position="353"/>
        <end position="373"/>
    </location>
</feature>
<feature type="compositionally biased region" description="Polar residues" evidence="3">
    <location>
        <begin position="514"/>
        <end position="530"/>
    </location>
</feature>
<feature type="modified residue" description="Phosphothreonine" evidence="1">
    <location>
        <position position="30"/>
    </location>
</feature>
<feature type="modified residue" description="Phosphothreonine" evidence="7">
    <location>
        <position position="306"/>
    </location>
</feature>
<feature type="modified residue" description="Phosphoserine" evidence="1">
    <location>
        <position position="321"/>
    </location>
</feature>
<feature type="modified residue" description="Phosphoserine" evidence="7">
    <location>
        <position position="341"/>
    </location>
</feature>
<feature type="modified residue" description="Phosphoserine" evidence="7">
    <location>
        <position position="430"/>
    </location>
</feature>
<feature type="modified residue" description="Phosphoserine" evidence="7">
    <location>
        <position position="442"/>
    </location>
</feature>
<feature type="modified residue" description="Phosphoserine" evidence="1">
    <location>
        <position position="444"/>
    </location>
</feature>
<feature type="modified residue" description="Phosphoserine" evidence="1">
    <location>
        <position position="491"/>
    </location>
</feature>
<feature type="splice variant" id="VSP_035078" description="In isoform 2." evidence="5">
    <original>E</original>
    <variation>EDGFDFSNEADSSIPGSPIQHGSTDLGIKRVQEGEVLVRRTPEHGSPEPTSAAATTE</variation>
    <location>
        <position position="330"/>
    </location>
</feature>
<feature type="sequence conflict" description="In Ref. 2; AAH68302." evidence="6" ref="2">
    <original>Q</original>
    <variation>R</variation>
    <location>
        <position position="239"/>
    </location>
</feature>
<sequence length="530" mass="58587">MLGSERAVVEEWLSEFKALPDTQITSYAATLHRKKALVPALYKVIQDSNNELLEPVCHQLFELYRSSEVRLKRFTLQFLPELIWVYLRLTVSRDRQSNGCIEALLLGIYNLEIADKDGNNKVLSFTIPSLSKPSIYHEPSTIGSMALTEGALCQHDLIRVVYSDLHPQRETFTAQNRFEVLSFLMLCYNSAIVYMPASSYQSLCRMGSRVCVSGFPRQHEKQWKELCGRIVLDPEFMVQLLTGVYYAMYNGQWDLGQEVLDDIIYRAQLELFSQPLLVANAMKNSLPFDAPDSSQEGQKVLKVEVTPTVPRISRTAITTASIRRHRWRREGAEGLNGGEESLNMNDADEGFSSGASLSSQPHGTKPPSSSQRGSLRKVATGRSAKDKETALAIKSNESPRDSVVGKQFVQQQADLSIDSVELTPMKKHLSLPAGQVVPKTNSLSLIRTASASSSKSFDYVNGGQASTSIGVGTEGVTNLAATNANRYSTISLQEDRLGHAGEGKELLSPGAPLTKQSRSPSFNMQLISQV</sequence>
<accession>Q8C729</accession>
<accession>Q3UMY7</accession>
<accession>Q6NV64</accession>
<reference key="1">
    <citation type="journal article" date="2005" name="Science">
        <title>The transcriptional landscape of the mammalian genome.</title>
        <authorList>
            <person name="Carninci P."/>
            <person name="Kasukawa T."/>
            <person name="Katayama S."/>
            <person name="Gough J."/>
            <person name="Frith M.C."/>
            <person name="Maeda N."/>
            <person name="Oyama R."/>
            <person name="Ravasi T."/>
            <person name="Lenhard B."/>
            <person name="Wells C."/>
            <person name="Kodzius R."/>
            <person name="Shimokawa K."/>
            <person name="Bajic V.B."/>
            <person name="Brenner S.E."/>
            <person name="Batalov S."/>
            <person name="Forrest A.R."/>
            <person name="Zavolan M."/>
            <person name="Davis M.J."/>
            <person name="Wilming L.G."/>
            <person name="Aidinis V."/>
            <person name="Allen J.E."/>
            <person name="Ambesi-Impiombato A."/>
            <person name="Apweiler R."/>
            <person name="Aturaliya R.N."/>
            <person name="Bailey T.L."/>
            <person name="Bansal M."/>
            <person name="Baxter L."/>
            <person name="Beisel K.W."/>
            <person name="Bersano T."/>
            <person name="Bono H."/>
            <person name="Chalk A.M."/>
            <person name="Chiu K.P."/>
            <person name="Choudhary V."/>
            <person name="Christoffels A."/>
            <person name="Clutterbuck D.R."/>
            <person name="Crowe M.L."/>
            <person name="Dalla E."/>
            <person name="Dalrymple B.P."/>
            <person name="de Bono B."/>
            <person name="Della Gatta G."/>
            <person name="di Bernardo D."/>
            <person name="Down T."/>
            <person name="Engstrom P."/>
            <person name="Fagiolini M."/>
            <person name="Faulkner G."/>
            <person name="Fletcher C.F."/>
            <person name="Fukushima T."/>
            <person name="Furuno M."/>
            <person name="Futaki S."/>
            <person name="Gariboldi M."/>
            <person name="Georgii-Hemming P."/>
            <person name="Gingeras T.R."/>
            <person name="Gojobori T."/>
            <person name="Green R.E."/>
            <person name="Gustincich S."/>
            <person name="Harbers M."/>
            <person name="Hayashi Y."/>
            <person name="Hensch T.K."/>
            <person name="Hirokawa N."/>
            <person name="Hill D."/>
            <person name="Huminiecki L."/>
            <person name="Iacono M."/>
            <person name="Ikeo K."/>
            <person name="Iwama A."/>
            <person name="Ishikawa T."/>
            <person name="Jakt M."/>
            <person name="Kanapin A."/>
            <person name="Katoh M."/>
            <person name="Kawasawa Y."/>
            <person name="Kelso J."/>
            <person name="Kitamura H."/>
            <person name="Kitano H."/>
            <person name="Kollias G."/>
            <person name="Krishnan S.P."/>
            <person name="Kruger A."/>
            <person name="Kummerfeld S.K."/>
            <person name="Kurochkin I.V."/>
            <person name="Lareau L.F."/>
            <person name="Lazarevic D."/>
            <person name="Lipovich L."/>
            <person name="Liu J."/>
            <person name="Liuni S."/>
            <person name="McWilliam S."/>
            <person name="Madan Babu M."/>
            <person name="Madera M."/>
            <person name="Marchionni L."/>
            <person name="Matsuda H."/>
            <person name="Matsuzawa S."/>
            <person name="Miki H."/>
            <person name="Mignone F."/>
            <person name="Miyake S."/>
            <person name="Morris K."/>
            <person name="Mottagui-Tabar S."/>
            <person name="Mulder N."/>
            <person name="Nakano N."/>
            <person name="Nakauchi H."/>
            <person name="Ng P."/>
            <person name="Nilsson R."/>
            <person name="Nishiguchi S."/>
            <person name="Nishikawa S."/>
            <person name="Nori F."/>
            <person name="Ohara O."/>
            <person name="Okazaki Y."/>
            <person name="Orlando V."/>
            <person name="Pang K.C."/>
            <person name="Pavan W.J."/>
            <person name="Pavesi G."/>
            <person name="Pesole G."/>
            <person name="Petrovsky N."/>
            <person name="Piazza S."/>
            <person name="Reed J."/>
            <person name="Reid J.F."/>
            <person name="Ring B.Z."/>
            <person name="Ringwald M."/>
            <person name="Rost B."/>
            <person name="Ruan Y."/>
            <person name="Salzberg S.L."/>
            <person name="Sandelin A."/>
            <person name="Schneider C."/>
            <person name="Schoenbach C."/>
            <person name="Sekiguchi K."/>
            <person name="Semple C.A."/>
            <person name="Seno S."/>
            <person name="Sessa L."/>
            <person name="Sheng Y."/>
            <person name="Shibata Y."/>
            <person name="Shimada H."/>
            <person name="Shimada K."/>
            <person name="Silva D."/>
            <person name="Sinclair B."/>
            <person name="Sperling S."/>
            <person name="Stupka E."/>
            <person name="Sugiura K."/>
            <person name="Sultana R."/>
            <person name="Takenaka Y."/>
            <person name="Taki K."/>
            <person name="Tammoja K."/>
            <person name="Tan S.L."/>
            <person name="Tang S."/>
            <person name="Taylor M.S."/>
            <person name="Tegner J."/>
            <person name="Teichmann S.A."/>
            <person name="Ueda H.R."/>
            <person name="van Nimwegen E."/>
            <person name="Verardo R."/>
            <person name="Wei C.L."/>
            <person name="Yagi K."/>
            <person name="Yamanishi H."/>
            <person name="Zabarovsky E."/>
            <person name="Zhu S."/>
            <person name="Zimmer A."/>
            <person name="Hide W."/>
            <person name="Bult C."/>
            <person name="Grimmond S.M."/>
            <person name="Teasdale R.D."/>
            <person name="Liu E.T."/>
            <person name="Brusic V."/>
            <person name="Quackenbush J."/>
            <person name="Wahlestedt C."/>
            <person name="Mattick J.S."/>
            <person name="Hume D.A."/>
            <person name="Kai C."/>
            <person name="Sasaki D."/>
            <person name="Tomaru Y."/>
            <person name="Fukuda S."/>
            <person name="Kanamori-Katayama M."/>
            <person name="Suzuki M."/>
            <person name="Aoki J."/>
            <person name="Arakawa T."/>
            <person name="Iida J."/>
            <person name="Imamura K."/>
            <person name="Itoh M."/>
            <person name="Kato T."/>
            <person name="Kawaji H."/>
            <person name="Kawagashira N."/>
            <person name="Kawashima T."/>
            <person name="Kojima M."/>
            <person name="Kondo S."/>
            <person name="Konno H."/>
            <person name="Nakano K."/>
            <person name="Ninomiya N."/>
            <person name="Nishio T."/>
            <person name="Okada M."/>
            <person name="Plessy C."/>
            <person name="Shibata K."/>
            <person name="Shiraki T."/>
            <person name="Suzuki S."/>
            <person name="Tagami M."/>
            <person name="Waki K."/>
            <person name="Watahiki A."/>
            <person name="Okamura-Oho Y."/>
            <person name="Suzuki H."/>
            <person name="Kawai J."/>
            <person name="Hayashizaki Y."/>
        </authorList>
    </citation>
    <scope>NUCLEOTIDE SEQUENCE [LARGE SCALE MRNA] (ISOFORMS 1 AND 2)</scope>
    <source>
        <strain>C57BL/6J</strain>
        <tissue>Amnion</tissue>
        <tissue>Kidney</tissue>
        <tissue>Lung</tissue>
    </source>
</reference>
<reference key="2">
    <citation type="journal article" date="2004" name="Genome Res.">
        <title>The status, quality, and expansion of the NIH full-length cDNA project: the Mammalian Gene Collection (MGC).</title>
        <authorList>
            <consortium name="The MGC Project Team"/>
        </authorList>
    </citation>
    <scope>NUCLEOTIDE SEQUENCE [LARGE SCALE MRNA] (ISOFORM 1)</scope>
    <source>
        <strain>C57BL/6J</strain>
        <tissue>Embryo</tissue>
    </source>
</reference>
<reference key="3">
    <citation type="journal article" date="2010" name="Cell">
        <title>A tissue-specific atlas of mouse protein phosphorylation and expression.</title>
        <authorList>
            <person name="Huttlin E.L."/>
            <person name="Jedrychowski M.P."/>
            <person name="Elias J.E."/>
            <person name="Goswami T."/>
            <person name="Rad R."/>
            <person name="Beausoleil S.A."/>
            <person name="Villen J."/>
            <person name="Haas W."/>
            <person name="Sowa M.E."/>
            <person name="Gygi S.P."/>
        </authorList>
    </citation>
    <scope>PHOSPHORYLATION [LARGE SCALE ANALYSIS] AT THR-306; SER-341; SER-430 AND SER-442</scope>
    <scope>IDENTIFICATION BY MASS SPECTROMETRY [LARGE SCALE ANALYSIS]</scope>
    <source>
        <tissue>Brain</tissue>
        <tissue>Brown adipose tissue</tissue>
        <tissue>Kidney</tissue>
    </source>
</reference>
<reference key="4">
    <citation type="journal article" date="2016" name="Nat. Cell Biol.">
        <title>The leukodystrophy protein FAM126A (hyccin) regulates PtdIns(4)P synthesis at the plasma membrane.</title>
        <authorList>
            <person name="Baskin J.M."/>
            <person name="Wu X."/>
            <person name="Christiano R."/>
            <person name="Oh M.S."/>
            <person name="Schauder C.M."/>
            <person name="Gazzerro E."/>
            <person name="Messa M."/>
            <person name="Baldassari S."/>
            <person name="Assereto S."/>
            <person name="Biancheri R."/>
            <person name="Zara F."/>
            <person name="Minetti C."/>
            <person name="Raimondi A."/>
            <person name="Simons M."/>
            <person name="Walther T.C."/>
            <person name="Reinisch K.M."/>
            <person name="De Camilli P."/>
        </authorList>
    </citation>
    <scope>TISSUE SPECIFICITY</scope>
</reference>
<gene>
    <name type="primary">Hycc2</name>
    <name type="synonym">D1Ertd53e</name>
    <name type="synonym">Fam126b</name>
</gene>
<keyword id="KW-0025">Alternative splicing</keyword>
<keyword id="KW-1003">Cell membrane</keyword>
<keyword id="KW-0963">Cytoplasm</keyword>
<keyword id="KW-0472">Membrane</keyword>
<keyword id="KW-0597">Phosphoprotein</keyword>
<keyword id="KW-1185">Reference proteome</keyword>
<evidence type="ECO:0000250" key="1">
    <source>
        <dbReference type="UniProtKB" id="Q8IXS8"/>
    </source>
</evidence>
<evidence type="ECO:0000250" key="2">
    <source>
        <dbReference type="UniProtKB" id="Q9BYI3"/>
    </source>
</evidence>
<evidence type="ECO:0000256" key="3">
    <source>
        <dbReference type="SAM" id="MobiDB-lite"/>
    </source>
</evidence>
<evidence type="ECO:0000269" key="4">
    <source>
    </source>
</evidence>
<evidence type="ECO:0000303" key="5">
    <source>
    </source>
</evidence>
<evidence type="ECO:0000305" key="6"/>
<evidence type="ECO:0007744" key="7">
    <source>
    </source>
</evidence>
<protein>
    <recommendedName>
        <fullName>Hyccin 2</fullName>
    </recommendedName>
</protein>
<dbReference type="EMBL" id="AK052638">
    <property type="protein sequence ID" value="BAC35073.1"/>
    <property type="molecule type" value="mRNA"/>
</dbReference>
<dbReference type="EMBL" id="AK144602">
    <property type="protein sequence ID" value="BAE25961.1"/>
    <property type="molecule type" value="mRNA"/>
</dbReference>
<dbReference type="EMBL" id="AK168372">
    <property type="protein sequence ID" value="BAE40304.1"/>
    <property type="molecule type" value="mRNA"/>
</dbReference>
<dbReference type="EMBL" id="BC068302">
    <property type="protein sequence ID" value="AAH68302.1"/>
    <property type="molecule type" value="mRNA"/>
</dbReference>
<dbReference type="CCDS" id="CCDS14976.1">
    <molecule id="Q8C729-1"/>
</dbReference>
<dbReference type="CCDS" id="CCDS78588.1">
    <molecule id="Q8C729-2"/>
</dbReference>
<dbReference type="RefSeq" id="NP_001297527.1">
    <molecule id="Q8C729-2"/>
    <property type="nucleotide sequence ID" value="NM_001310598.1"/>
</dbReference>
<dbReference type="RefSeq" id="NP_001297528.1">
    <molecule id="Q8C729-1"/>
    <property type="nucleotide sequence ID" value="NM_001310599.1"/>
</dbReference>
<dbReference type="RefSeq" id="NP_766101.3">
    <molecule id="Q8C729-1"/>
    <property type="nucleotide sequence ID" value="NM_172513.3"/>
</dbReference>
<dbReference type="RefSeq" id="XP_006495895.1">
    <molecule id="Q8C729-2"/>
    <property type="nucleotide sequence ID" value="XM_006495832.4"/>
</dbReference>
<dbReference type="RefSeq" id="XP_006495896.1">
    <molecule id="Q8C729-2"/>
    <property type="nucleotide sequence ID" value="XM_006495833.4"/>
</dbReference>
<dbReference type="RefSeq" id="XP_017175146.1">
    <molecule id="Q8C729-1"/>
    <property type="nucleotide sequence ID" value="XM_017319657.3"/>
</dbReference>
<dbReference type="RefSeq" id="XP_030108614.1">
    <molecule id="Q8C729-1"/>
    <property type="nucleotide sequence ID" value="XM_030252754.2"/>
</dbReference>
<dbReference type="SMR" id="Q8C729"/>
<dbReference type="BioGRID" id="229395">
    <property type="interactions" value="9"/>
</dbReference>
<dbReference type="FunCoup" id="Q8C729">
    <property type="interactions" value="1883"/>
</dbReference>
<dbReference type="STRING" id="10090.ENSMUSP00000095331"/>
<dbReference type="GlyGen" id="Q8C729">
    <property type="glycosylation" value="1 site, 1 O-linked glycan (1 site)"/>
</dbReference>
<dbReference type="iPTMnet" id="Q8C729"/>
<dbReference type="PhosphoSitePlus" id="Q8C729"/>
<dbReference type="SwissPalm" id="Q8C729"/>
<dbReference type="jPOST" id="Q8C729"/>
<dbReference type="PaxDb" id="10090-ENSMUSP00000123728"/>
<dbReference type="PeptideAtlas" id="Q8C729"/>
<dbReference type="ProteomicsDB" id="275821">
    <molecule id="Q8C729-1"/>
</dbReference>
<dbReference type="ProteomicsDB" id="275822">
    <molecule id="Q8C729-2"/>
</dbReference>
<dbReference type="Antibodypedia" id="50921">
    <property type="antibodies" value="42 antibodies from 9 providers"/>
</dbReference>
<dbReference type="DNASU" id="213056"/>
<dbReference type="Ensembl" id="ENSMUST00000038372.14">
    <molecule id="Q8C729-1"/>
    <property type="protein sequence ID" value="ENSMUSP00000038718.8"/>
    <property type="gene ID" value="ENSMUSG00000038174.15"/>
</dbReference>
<dbReference type="Ensembl" id="ENSMUST00000097724.10">
    <molecule id="Q8C729-2"/>
    <property type="protein sequence ID" value="ENSMUSP00000095331.4"/>
    <property type="gene ID" value="ENSMUSG00000038174.15"/>
</dbReference>
<dbReference type="Ensembl" id="ENSMUST00000161600.8">
    <molecule id="Q8C729-1"/>
    <property type="protein sequence ID" value="ENSMUSP00000123728.2"/>
    <property type="gene ID" value="ENSMUSG00000038174.15"/>
</dbReference>
<dbReference type="GeneID" id="213056"/>
<dbReference type="KEGG" id="mmu:213056"/>
<dbReference type="UCSC" id="uc007bch.2">
    <molecule id="Q8C729-1"/>
    <property type="organism name" value="mouse"/>
</dbReference>
<dbReference type="UCSC" id="uc007bcj.2">
    <molecule id="Q8C729-2"/>
    <property type="organism name" value="mouse"/>
</dbReference>
<dbReference type="AGR" id="MGI:1098784"/>
<dbReference type="CTD" id="285172"/>
<dbReference type="MGI" id="MGI:1098784">
    <property type="gene designation" value="Hycc2"/>
</dbReference>
<dbReference type="VEuPathDB" id="HostDB:ENSMUSG00000038174"/>
<dbReference type="eggNOG" id="KOG4688">
    <property type="taxonomic scope" value="Eukaryota"/>
</dbReference>
<dbReference type="GeneTree" id="ENSGT00390000011295"/>
<dbReference type="HOGENOM" id="CLU_027457_3_0_1"/>
<dbReference type="InParanoid" id="Q8C729"/>
<dbReference type="OMA" id="SIYHEXF"/>
<dbReference type="OrthoDB" id="32208at9989"/>
<dbReference type="PhylomeDB" id="Q8C729"/>
<dbReference type="TreeFam" id="TF317153"/>
<dbReference type="BioGRID-ORCS" id="213056">
    <property type="hits" value="1 hit in 76 CRISPR screens"/>
</dbReference>
<dbReference type="CD-CODE" id="CE726F99">
    <property type="entry name" value="Postsynaptic density"/>
</dbReference>
<dbReference type="ChiTaRS" id="Fam126b">
    <property type="organism name" value="mouse"/>
</dbReference>
<dbReference type="PRO" id="PR:Q8C729"/>
<dbReference type="Proteomes" id="UP000000589">
    <property type="component" value="Chromosome 1"/>
</dbReference>
<dbReference type="RNAct" id="Q8C729">
    <property type="molecule type" value="protein"/>
</dbReference>
<dbReference type="Bgee" id="ENSMUSG00000038174">
    <property type="expression patterns" value="Expressed in lateral geniculate body and 258 other cell types or tissues"/>
</dbReference>
<dbReference type="ExpressionAtlas" id="Q8C729">
    <property type="expression patterns" value="baseline and differential"/>
</dbReference>
<dbReference type="GO" id="GO:0005829">
    <property type="term" value="C:cytosol"/>
    <property type="evidence" value="ECO:0007669"/>
    <property type="project" value="UniProtKB-SubCell"/>
</dbReference>
<dbReference type="GO" id="GO:0005886">
    <property type="term" value="C:plasma membrane"/>
    <property type="evidence" value="ECO:0007669"/>
    <property type="project" value="UniProtKB-SubCell"/>
</dbReference>
<dbReference type="InterPro" id="IPR018619">
    <property type="entry name" value="Hyccin"/>
</dbReference>
<dbReference type="PANTHER" id="PTHR31220:SF3">
    <property type="entry name" value="HYCCIN 2"/>
    <property type="match status" value="1"/>
</dbReference>
<dbReference type="PANTHER" id="PTHR31220">
    <property type="entry name" value="HYCCIN RELATED"/>
    <property type="match status" value="1"/>
</dbReference>
<dbReference type="Pfam" id="PF09790">
    <property type="entry name" value="Hyccin"/>
    <property type="match status" value="1"/>
</dbReference>
<organism>
    <name type="scientific">Mus musculus</name>
    <name type="common">Mouse</name>
    <dbReference type="NCBI Taxonomy" id="10090"/>
    <lineage>
        <taxon>Eukaryota</taxon>
        <taxon>Metazoa</taxon>
        <taxon>Chordata</taxon>
        <taxon>Craniata</taxon>
        <taxon>Vertebrata</taxon>
        <taxon>Euteleostomi</taxon>
        <taxon>Mammalia</taxon>
        <taxon>Eutheria</taxon>
        <taxon>Euarchontoglires</taxon>
        <taxon>Glires</taxon>
        <taxon>Rodentia</taxon>
        <taxon>Myomorpha</taxon>
        <taxon>Muroidea</taxon>
        <taxon>Muridae</taxon>
        <taxon>Murinae</taxon>
        <taxon>Mus</taxon>
        <taxon>Mus</taxon>
    </lineage>
</organism>
<proteinExistence type="evidence at protein level"/>
<name>HYCC2_MOUSE</name>